<dbReference type="EMBL" id="AE001437">
    <property type="protein sequence ID" value="AAK79677.1"/>
    <property type="molecule type" value="Genomic_DNA"/>
</dbReference>
<dbReference type="PIR" id="B97111">
    <property type="entry name" value="B97111"/>
</dbReference>
<dbReference type="RefSeq" id="NP_348337.1">
    <property type="nucleotide sequence ID" value="NC_003030.1"/>
</dbReference>
<dbReference type="RefSeq" id="WP_010965018.1">
    <property type="nucleotide sequence ID" value="NC_003030.1"/>
</dbReference>
<dbReference type="SMR" id="Q97ID7"/>
<dbReference type="STRING" id="272562.CA_C1711"/>
<dbReference type="GeneID" id="44998206"/>
<dbReference type="KEGG" id="cac:CA_C1711"/>
<dbReference type="PATRIC" id="fig|272562.8.peg.1913"/>
<dbReference type="eggNOG" id="COG1160">
    <property type="taxonomic scope" value="Bacteria"/>
</dbReference>
<dbReference type="HOGENOM" id="CLU_016077_6_2_9"/>
<dbReference type="OrthoDB" id="9805918at2"/>
<dbReference type="Proteomes" id="UP000000814">
    <property type="component" value="Chromosome"/>
</dbReference>
<dbReference type="GO" id="GO:0005525">
    <property type="term" value="F:GTP binding"/>
    <property type="evidence" value="ECO:0007669"/>
    <property type="project" value="UniProtKB-UniRule"/>
</dbReference>
<dbReference type="GO" id="GO:0043022">
    <property type="term" value="F:ribosome binding"/>
    <property type="evidence" value="ECO:0007669"/>
    <property type="project" value="TreeGrafter"/>
</dbReference>
<dbReference type="GO" id="GO:0042254">
    <property type="term" value="P:ribosome biogenesis"/>
    <property type="evidence" value="ECO:0007669"/>
    <property type="project" value="UniProtKB-KW"/>
</dbReference>
<dbReference type="CDD" id="cd01894">
    <property type="entry name" value="EngA1"/>
    <property type="match status" value="1"/>
</dbReference>
<dbReference type="CDD" id="cd01895">
    <property type="entry name" value="EngA2"/>
    <property type="match status" value="1"/>
</dbReference>
<dbReference type="FunFam" id="3.30.300.20:FF:000004">
    <property type="entry name" value="GTPase Der"/>
    <property type="match status" value="1"/>
</dbReference>
<dbReference type="FunFam" id="3.40.50.300:FF:000040">
    <property type="entry name" value="GTPase Der"/>
    <property type="match status" value="1"/>
</dbReference>
<dbReference type="FunFam" id="3.40.50.300:FF:000057">
    <property type="entry name" value="GTPase Der"/>
    <property type="match status" value="1"/>
</dbReference>
<dbReference type="Gene3D" id="3.30.300.20">
    <property type="match status" value="1"/>
</dbReference>
<dbReference type="Gene3D" id="3.40.50.300">
    <property type="entry name" value="P-loop containing nucleotide triphosphate hydrolases"/>
    <property type="match status" value="2"/>
</dbReference>
<dbReference type="HAMAP" id="MF_00195">
    <property type="entry name" value="GTPase_Der"/>
    <property type="match status" value="1"/>
</dbReference>
<dbReference type="InterPro" id="IPR031166">
    <property type="entry name" value="G_ENGA"/>
</dbReference>
<dbReference type="InterPro" id="IPR006073">
    <property type="entry name" value="GTP-bd"/>
</dbReference>
<dbReference type="InterPro" id="IPR016484">
    <property type="entry name" value="GTPase_Der"/>
</dbReference>
<dbReference type="InterPro" id="IPR032859">
    <property type="entry name" value="KH_dom-like"/>
</dbReference>
<dbReference type="InterPro" id="IPR015946">
    <property type="entry name" value="KH_dom-like_a/b"/>
</dbReference>
<dbReference type="InterPro" id="IPR027417">
    <property type="entry name" value="P-loop_NTPase"/>
</dbReference>
<dbReference type="InterPro" id="IPR005225">
    <property type="entry name" value="Small_GTP-bd"/>
</dbReference>
<dbReference type="NCBIfam" id="TIGR03594">
    <property type="entry name" value="GTPase_EngA"/>
    <property type="match status" value="1"/>
</dbReference>
<dbReference type="NCBIfam" id="TIGR00231">
    <property type="entry name" value="small_GTP"/>
    <property type="match status" value="2"/>
</dbReference>
<dbReference type="PANTHER" id="PTHR43834">
    <property type="entry name" value="GTPASE DER"/>
    <property type="match status" value="1"/>
</dbReference>
<dbReference type="PANTHER" id="PTHR43834:SF6">
    <property type="entry name" value="GTPASE DER"/>
    <property type="match status" value="1"/>
</dbReference>
<dbReference type="Pfam" id="PF14714">
    <property type="entry name" value="KH_dom-like"/>
    <property type="match status" value="1"/>
</dbReference>
<dbReference type="Pfam" id="PF01926">
    <property type="entry name" value="MMR_HSR1"/>
    <property type="match status" value="2"/>
</dbReference>
<dbReference type="PIRSF" id="PIRSF006485">
    <property type="entry name" value="GTP-binding_EngA"/>
    <property type="match status" value="1"/>
</dbReference>
<dbReference type="PRINTS" id="PR00449">
    <property type="entry name" value="RASTRNSFRMNG"/>
</dbReference>
<dbReference type="SUPFAM" id="SSF52540">
    <property type="entry name" value="P-loop containing nucleoside triphosphate hydrolases"/>
    <property type="match status" value="2"/>
</dbReference>
<dbReference type="PROSITE" id="PS51712">
    <property type="entry name" value="G_ENGA"/>
    <property type="match status" value="2"/>
</dbReference>
<gene>
    <name evidence="1" type="primary">der</name>
    <name type="synonym">engA</name>
    <name type="ordered locus">CA_C1711</name>
</gene>
<accession>Q97ID7</accession>
<feature type="chain" id="PRO_0000178984" description="GTPase Der">
    <location>
        <begin position="1"/>
        <end position="438"/>
    </location>
</feature>
<feature type="domain" description="EngA-type G 1">
    <location>
        <begin position="4"/>
        <end position="168"/>
    </location>
</feature>
<feature type="domain" description="EngA-type G 2">
    <location>
        <begin position="177"/>
        <end position="352"/>
    </location>
</feature>
<feature type="domain" description="KH-like" evidence="1">
    <location>
        <begin position="353"/>
        <end position="437"/>
    </location>
</feature>
<feature type="binding site" evidence="1">
    <location>
        <begin position="10"/>
        <end position="17"/>
    </location>
    <ligand>
        <name>GTP</name>
        <dbReference type="ChEBI" id="CHEBI:37565"/>
        <label>1</label>
    </ligand>
</feature>
<feature type="binding site" evidence="1">
    <location>
        <begin position="57"/>
        <end position="61"/>
    </location>
    <ligand>
        <name>GTP</name>
        <dbReference type="ChEBI" id="CHEBI:37565"/>
        <label>1</label>
    </ligand>
</feature>
<feature type="binding site" evidence="1">
    <location>
        <begin position="120"/>
        <end position="123"/>
    </location>
    <ligand>
        <name>GTP</name>
        <dbReference type="ChEBI" id="CHEBI:37565"/>
        <label>1</label>
    </ligand>
</feature>
<feature type="binding site" evidence="1">
    <location>
        <begin position="183"/>
        <end position="190"/>
    </location>
    <ligand>
        <name>GTP</name>
        <dbReference type="ChEBI" id="CHEBI:37565"/>
        <label>2</label>
    </ligand>
</feature>
<feature type="binding site" evidence="1">
    <location>
        <begin position="230"/>
        <end position="234"/>
    </location>
    <ligand>
        <name>GTP</name>
        <dbReference type="ChEBI" id="CHEBI:37565"/>
        <label>2</label>
    </ligand>
</feature>
<feature type="binding site" evidence="1">
    <location>
        <begin position="295"/>
        <end position="298"/>
    </location>
    <ligand>
        <name>GTP</name>
        <dbReference type="ChEBI" id="CHEBI:37565"/>
        <label>2</label>
    </ligand>
</feature>
<reference key="1">
    <citation type="journal article" date="2001" name="J. Bacteriol.">
        <title>Genome sequence and comparative analysis of the solvent-producing bacterium Clostridium acetobutylicum.</title>
        <authorList>
            <person name="Noelling J."/>
            <person name="Breton G."/>
            <person name="Omelchenko M.V."/>
            <person name="Makarova K.S."/>
            <person name="Zeng Q."/>
            <person name="Gibson R."/>
            <person name="Lee H.M."/>
            <person name="Dubois J."/>
            <person name="Qiu D."/>
            <person name="Hitti J."/>
            <person name="Wolf Y.I."/>
            <person name="Tatusov R.L."/>
            <person name="Sabathe F."/>
            <person name="Doucette-Stamm L.A."/>
            <person name="Soucaille P."/>
            <person name="Daly M.J."/>
            <person name="Bennett G.N."/>
            <person name="Koonin E.V."/>
            <person name="Smith D.R."/>
        </authorList>
    </citation>
    <scope>NUCLEOTIDE SEQUENCE [LARGE SCALE GENOMIC DNA]</scope>
    <source>
        <strain>ATCC 824 / DSM 792 / JCM 1419 / IAM 19013 / LMG 5710 / NBRC 13948 / NRRL B-527 / VKM B-1787 / 2291 / W</strain>
    </source>
</reference>
<organism>
    <name type="scientific">Clostridium acetobutylicum (strain ATCC 824 / DSM 792 / JCM 1419 / IAM 19013 / LMG 5710 / NBRC 13948 / NRRL B-527 / VKM B-1787 / 2291 / W)</name>
    <dbReference type="NCBI Taxonomy" id="272562"/>
    <lineage>
        <taxon>Bacteria</taxon>
        <taxon>Bacillati</taxon>
        <taxon>Bacillota</taxon>
        <taxon>Clostridia</taxon>
        <taxon>Eubacteriales</taxon>
        <taxon>Clostridiaceae</taxon>
        <taxon>Clostridium</taxon>
    </lineage>
</organism>
<proteinExistence type="inferred from homology"/>
<name>DER_CLOAB</name>
<evidence type="ECO:0000255" key="1">
    <source>
        <dbReference type="HAMAP-Rule" id="MF_00195"/>
    </source>
</evidence>
<keyword id="KW-0342">GTP-binding</keyword>
<keyword id="KW-0547">Nucleotide-binding</keyword>
<keyword id="KW-1185">Reference proteome</keyword>
<keyword id="KW-0677">Repeat</keyword>
<keyword id="KW-0690">Ribosome biogenesis</keyword>
<comment type="function">
    <text evidence="1">GTPase that plays an essential role in the late steps of ribosome biogenesis.</text>
</comment>
<comment type="subunit">
    <text evidence="1">Associates with the 50S ribosomal subunit.</text>
</comment>
<comment type="similarity">
    <text evidence="1">Belongs to the TRAFAC class TrmE-Era-EngA-EngB-Septin-like GTPase superfamily. EngA (Der) GTPase family.</text>
</comment>
<sequence>MAKPLVTIVGRPNVGKSTLFNKLAGKRVSIVEDTPGVTRDRIYAESEWVGKKFTIIDTGGIEPENNDIILTQMRRQAQIAIEMSDVIIFMVDGKQGLTDTDNEVAIMLRKSKKPIVLVVNKIDKNVEENNIYEFYNLGIGDPVSISSSQGLGIGDMLDEVVNKFKSEGEDEEEEEYIKIAFVGKPNVGKSSLTNRILGEERVIVSDIPGTTRDAIDSFLETDFGKLVLIDTAGLRRKSRIKEEIERYSAVRTMAAIERCDVCTLILDATEPISEQDERIIGYAHENNKAILVIVNKWDLIEKDDKTMENFKKNLEMKFSFMAYAPFLFISAKTGQRVHKVLSEIKKCYDNYSKRIATGVLNDVISNAVLMKEPPVVAFKRLKIFYVTQTDIKPPTFIFFVNNPELLHFSYRRYLENKLRQSFDFEGTGIKMIFKERKN</sequence>
<protein>
    <recommendedName>
        <fullName evidence="1">GTPase Der</fullName>
    </recommendedName>
    <alternativeName>
        <fullName evidence="1">GTP-binding protein EngA</fullName>
    </alternativeName>
</protein>